<organism>
    <name type="scientific">Polaromonas sp. (strain JS666 / ATCC BAA-500)</name>
    <dbReference type="NCBI Taxonomy" id="296591"/>
    <lineage>
        <taxon>Bacteria</taxon>
        <taxon>Pseudomonadati</taxon>
        <taxon>Pseudomonadota</taxon>
        <taxon>Betaproteobacteria</taxon>
        <taxon>Burkholderiales</taxon>
        <taxon>Comamonadaceae</taxon>
        <taxon>Polaromonas</taxon>
    </lineage>
</organism>
<protein>
    <recommendedName>
        <fullName evidence="1">Indole-3-glycerol phosphate synthase</fullName>
        <shortName evidence="1">IGPS</shortName>
        <ecNumber evidence="1">4.1.1.48</ecNumber>
    </recommendedName>
</protein>
<name>TRPC_POLSJ</name>
<comment type="catalytic activity">
    <reaction evidence="1">
        <text>1-(2-carboxyphenylamino)-1-deoxy-D-ribulose 5-phosphate + H(+) = (1S,2R)-1-C-(indol-3-yl)glycerol 3-phosphate + CO2 + H2O</text>
        <dbReference type="Rhea" id="RHEA:23476"/>
        <dbReference type="ChEBI" id="CHEBI:15377"/>
        <dbReference type="ChEBI" id="CHEBI:15378"/>
        <dbReference type="ChEBI" id="CHEBI:16526"/>
        <dbReference type="ChEBI" id="CHEBI:58613"/>
        <dbReference type="ChEBI" id="CHEBI:58866"/>
        <dbReference type="EC" id="4.1.1.48"/>
    </reaction>
</comment>
<comment type="pathway">
    <text evidence="1">Amino-acid biosynthesis; L-tryptophan biosynthesis; L-tryptophan from chorismate: step 4/5.</text>
</comment>
<comment type="similarity">
    <text evidence="1">Belongs to the TrpC family.</text>
</comment>
<keyword id="KW-0028">Amino-acid biosynthesis</keyword>
<keyword id="KW-0057">Aromatic amino acid biosynthesis</keyword>
<keyword id="KW-0210">Decarboxylase</keyword>
<keyword id="KW-0456">Lyase</keyword>
<keyword id="KW-1185">Reference proteome</keyword>
<keyword id="KW-0822">Tryptophan biosynthesis</keyword>
<feature type="chain" id="PRO_1000018518" description="Indole-3-glycerol phosphate synthase">
    <location>
        <begin position="1"/>
        <end position="264"/>
    </location>
</feature>
<dbReference type="EC" id="4.1.1.48" evidence="1"/>
<dbReference type="EMBL" id="CP000316">
    <property type="protein sequence ID" value="ABE46338.1"/>
    <property type="molecule type" value="Genomic_DNA"/>
</dbReference>
<dbReference type="RefSeq" id="WP_011485326.1">
    <property type="nucleotide sequence ID" value="NC_007948.1"/>
</dbReference>
<dbReference type="SMR" id="Q123F4"/>
<dbReference type="STRING" id="296591.Bpro_4451"/>
<dbReference type="KEGG" id="pol:Bpro_4451"/>
<dbReference type="eggNOG" id="COG0134">
    <property type="taxonomic scope" value="Bacteria"/>
</dbReference>
<dbReference type="HOGENOM" id="CLU_034247_2_0_4"/>
<dbReference type="OrthoDB" id="9804217at2"/>
<dbReference type="UniPathway" id="UPA00035">
    <property type="reaction ID" value="UER00043"/>
</dbReference>
<dbReference type="Proteomes" id="UP000001983">
    <property type="component" value="Chromosome"/>
</dbReference>
<dbReference type="GO" id="GO:0004425">
    <property type="term" value="F:indole-3-glycerol-phosphate synthase activity"/>
    <property type="evidence" value="ECO:0007669"/>
    <property type="project" value="UniProtKB-UniRule"/>
</dbReference>
<dbReference type="GO" id="GO:0004640">
    <property type="term" value="F:phosphoribosylanthranilate isomerase activity"/>
    <property type="evidence" value="ECO:0007669"/>
    <property type="project" value="TreeGrafter"/>
</dbReference>
<dbReference type="GO" id="GO:0000162">
    <property type="term" value="P:L-tryptophan biosynthetic process"/>
    <property type="evidence" value="ECO:0007669"/>
    <property type="project" value="UniProtKB-UniRule"/>
</dbReference>
<dbReference type="CDD" id="cd00331">
    <property type="entry name" value="IGPS"/>
    <property type="match status" value="1"/>
</dbReference>
<dbReference type="FunFam" id="3.20.20.70:FF:000024">
    <property type="entry name" value="Indole-3-glycerol phosphate synthase"/>
    <property type="match status" value="1"/>
</dbReference>
<dbReference type="Gene3D" id="3.20.20.70">
    <property type="entry name" value="Aldolase class I"/>
    <property type="match status" value="1"/>
</dbReference>
<dbReference type="HAMAP" id="MF_00134_B">
    <property type="entry name" value="IGPS_B"/>
    <property type="match status" value="1"/>
</dbReference>
<dbReference type="InterPro" id="IPR013785">
    <property type="entry name" value="Aldolase_TIM"/>
</dbReference>
<dbReference type="InterPro" id="IPR045186">
    <property type="entry name" value="Indole-3-glycerol_P_synth"/>
</dbReference>
<dbReference type="InterPro" id="IPR013798">
    <property type="entry name" value="Indole-3-glycerol_P_synth_dom"/>
</dbReference>
<dbReference type="InterPro" id="IPR001468">
    <property type="entry name" value="Indole-3-GlycerolPSynthase_CS"/>
</dbReference>
<dbReference type="InterPro" id="IPR011060">
    <property type="entry name" value="RibuloseP-bd_barrel"/>
</dbReference>
<dbReference type="NCBIfam" id="NF001370">
    <property type="entry name" value="PRK00278.1-2"/>
    <property type="match status" value="1"/>
</dbReference>
<dbReference type="NCBIfam" id="NF001373">
    <property type="entry name" value="PRK00278.1-6"/>
    <property type="match status" value="1"/>
</dbReference>
<dbReference type="NCBIfam" id="NF001377">
    <property type="entry name" value="PRK00278.2-4"/>
    <property type="match status" value="1"/>
</dbReference>
<dbReference type="PANTHER" id="PTHR22854:SF2">
    <property type="entry name" value="INDOLE-3-GLYCEROL-PHOSPHATE SYNTHASE"/>
    <property type="match status" value="1"/>
</dbReference>
<dbReference type="PANTHER" id="PTHR22854">
    <property type="entry name" value="TRYPTOPHAN BIOSYNTHESIS PROTEIN"/>
    <property type="match status" value="1"/>
</dbReference>
<dbReference type="Pfam" id="PF00218">
    <property type="entry name" value="IGPS"/>
    <property type="match status" value="1"/>
</dbReference>
<dbReference type="SUPFAM" id="SSF51366">
    <property type="entry name" value="Ribulose-phoshate binding barrel"/>
    <property type="match status" value="1"/>
</dbReference>
<dbReference type="PROSITE" id="PS00614">
    <property type="entry name" value="IGPS"/>
    <property type="match status" value="1"/>
</dbReference>
<accession>Q123F4</accession>
<evidence type="ECO:0000255" key="1">
    <source>
        <dbReference type="HAMAP-Rule" id="MF_00134"/>
    </source>
</evidence>
<sequence length="264" mass="28767">MSDILDKIIAVKREEIAQAIKRKPLAVVREDAESRVLTRDFVGALRAKISAGKPAVIAEVKKASPSKGVLRADFIPADIAQSYAEHGAACLSVLTDRQFFQGSVDYLKQARASCALPVLRKDFMVDAYQVYEARVMGADCILLIVACLDDAQMKALEALAFSLDMAVLVEVHDEAELERALKLRTPLVGINNRNLKTFEVSLDNTLSLLGKVPADRLLVTESGISTPADVKRLREARVNAFLVGEAFMRAEDPGVALAQLFGLD</sequence>
<proteinExistence type="inferred from homology"/>
<reference key="1">
    <citation type="journal article" date="2008" name="Appl. Environ. Microbiol.">
        <title>The genome of Polaromonas sp. strain JS666: insights into the evolution of a hydrocarbon- and xenobiotic-degrading bacterium, and features of relevance to biotechnology.</title>
        <authorList>
            <person name="Mattes T.E."/>
            <person name="Alexander A.K."/>
            <person name="Richardson P.M."/>
            <person name="Munk A.C."/>
            <person name="Han C.S."/>
            <person name="Stothard P."/>
            <person name="Coleman N.V."/>
        </authorList>
    </citation>
    <scope>NUCLEOTIDE SEQUENCE [LARGE SCALE GENOMIC DNA]</scope>
    <source>
        <strain>JS666 / ATCC BAA-500</strain>
    </source>
</reference>
<gene>
    <name evidence="1" type="primary">trpC</name>
    <name type="ordered locus">Bpro_4451</name>
</gene>